<organismHost>
    <name type="scientific">Homo sapiens</name>
    <name type="common">Human</name>
    <dbReference type="NCBI Taxonomy" id="9606"/>
</organismHost>
<keyword id="KW-1035">Host cytoplasm</keyword>
<keyword id="KW-0945">Host-virus interaction</keyword>
<keyword id="KW-0479">Metal-binding</keyword>
<keyword id="KW-1119">Modulation of host cell apoptosis by virus</keyword>
<keyword id="KW-1128">Modulation of host ubiquitin pathway by viral E3 ligase</keyword>
<keyword id="KW-1130">Modulation of host ubiquitin pathway by virus</keyword>
<keyword id="KW-0808">Transferase</keyword>
<keyword id="KW-0833">Ubl conjugation pathway</keyword>
<keyword id="KW-0862">Zinc</keyword>
<keyword id="KW-0863">Zinc-finger</keyword>
<accession>Q49PZ0</accession>
<proteinExistence type="inferred from homology"/>
<organism>
    <name type="scientific">Vaccinia virus (strain LC16m0)</name>
    <name type="common">VACV</name>
    <dbReference type="NCBI Taxonomy" id="10246"/>
    <lineage>
        <taxon>Viruses</taxon>
        <taxon>Varidnaviria</taxon>
        <taxon>Bamfordvirae</taxon>
        <taxon>Nucleocytoviricota</taxon>
        <taxon>Pokkesviricetes</taxon>
        <taxon>Chitovirales</taxon>
        <taxon>Poxviridae</taxon>
        <taxon>Chordopoxvirinae</taxon>
        <taxon>Orthopoxvirus</taxon>
        <taxon>Vaccinia virus</taxon>
    </lineage>
</organism>
<evidence type="ECO:0000250" key="1">
    <source>
        <dbReference type="UniProtKB" id="Q85318"/>
    </source>
</evidence>
<evidence type="ECO:0000255" key="2">
    <source>
        <dbReference type="PROSITE-ProRule" id="PRU00175"/>
    </source>
</evidence>
<evidence type="ECO:0000255" key="3">
    <source>
        <dbReference type="PROSITE-ProRule" id="PRU00631"/>
    </source>
</evidence>
<evidence type="ECO:0000305" key="4"/>
<gene>
    <name type="primary">OPG021</name>
    <name type="synonym">p28</name>
    <name type="ORF">mO008R</name>
</gene>
<reference key="1">
    <citation type="journal article" date="2005" name="J. Virol.">
        <title>An attenuated LC16m8 smallpox vaccine: analysis of full-genome sequence and induction of immune protection.</title>
        <authorList>
            <person name="Morikawa S."/>
            <person name="Sakiyama T."/>
            <person name="Hasegawa H."/>
            <person name="Saijo M."/>
            <person name="Maeda A."/>
            <person name="Kurane I."/>
            <person name="Maeno G."/>
            <person name="Kimura J."/>
            <person name="Hirama C."/>
            <person name="Yoshida T."/>
            <person name="Asahi-Ozaki Y."/>
            <person name="Sata T."/>
            <person name="Kurata T."/>
            <person name="Kojima A."/>
        </authorList>
    </citation>
    <scope>NUCLEOTIDE SEQUENCE [LARGE SCALE GENOMIC DNA]</scope>
</reference>
<comment type="function">
    <text evidence="1">RING-finger E3 ubiquitin ligase which catalyzes the formation of both 'Lys-48'- and 'Lys-63'-linked polyubiquitin chains. Plays an important role in virulence by acting as an anti-apoptotic factor.</text>
</comment>
<comment type="subcellular location">
    <subcellularLocation>
        <location>Host cytoplasm</location>
    </subcellularLocation>
    <text evidence="1">Localizes to viral factories, the sites of virus replication.</text>
</comment>
<comment type="miscellaneous">
    <text>The vaccinia strains LC16m0 and LC16m8 encode a full-length E3 ubiquitin ligase p28 unlike the majority of the vaccinia strains.</text>
</comment>
<comment type="similarity">
    <text evidence="4">Belongs to the orthopoxvirus OPG021 family.</text>
</comment>
<dbReference type="EC" id="2.3.2.-"/>
<dbReference type="EMBL" id="AY678277">
    <property type="protein sequence ID" value="AAW23683.1"/>
    <property type="molecule type" value="Genomic_DNA"/>
</dbReference>
<dbReference type="Proteomes" id="UP000171434">
    <property type="component" value="Segment"/>
</dbReference>
<dbReference type="GO" id="GO:0030430">
    <property type="term" value="C:host cell cytoplasm"/>
    <property type="evidence" value="ECO:0007669"/>
    <property type="project" value="UniProtKB-SubCell"/>
</dbReference>
<dbReference type="GO" id="GO:0016881">
    <property type="term" value="F:acid-amino acid ligase activity"/>
    <property type="evidence" value="ECO:0007669"/>
    <property type="project" value="InterPro"/>
</dbReference>
<dbReference type="GO" id="GO:0061630">
    <property type="term" value="F:ubiquitin protein ligase activity"/>
    <property type="evidence" value="ECO:0007669"/>
    <property type="project" value="InterPro"/>
</dbReference>
<dbReference type="GO" id="GO:0008270">
    <property type="term" value="F:zinc ion binding"/>
    <property type="evidence" value="ECO:0007669"/>
    <property type="project" value="UniProtKB-KW"/>
</dbReference>
<dbReference type="GO" id="GO:0000209">
    <property type="term" value="P:protein polyubiquitination"/>
    <property type="evidence" value="ECO:0007669"/>
    <property type="project" value="InterPro"/>
</dbReference>
<dbReference type="GO" id="GO:0052150">
    <property type="term" value="P:symbiont-mediated perturbation of host apoptosis"/>
    <property type="evidence" value="ECO:0007669"/>
    <property type="project" value="UniProtKB-KW"/>
</dbReference>
<dbReference type="GO" id="GO:0039648">
    <property type="term" value="P:symbiont-mediated perturbation of host ubiquitin-like protein modification"/>
    <property type="evidence" value="ECO:0007669"/>
    <property type="project" value="UniProtKB-KW"/>
</dbReference>
<dbReference type="Gene3D" id="3.30.40.10">
    <property type="entry name" value="Zinc/RING finger domain, C3HC4 (zinc finger)"/>
    <property type="match status" value="1"/>
</dbReference>
<dbReference type="InterPro" id="IPR016398">
    <property type="entry name" value="E3_ubiquitin-prot_ligase_p28"/>
</dbReference>
<dbReference type="InterPro" id="IPR018004">
    <property type="entry name" value="KilA/APSES_HTH"/>
</dbReference>
<dbReference type="InterPro" id="IPR017880">
    <property type="entry name" value="KilA_N"/>
</dbReference>
<dbReference type="InterPro" id="IPR045072">
    <property type="entry name" value="MKRN-like"/>
</dbReference>
<dbReference type="InterPro" id="IPR001841">
    <property type="entry name" value="Znf_RING"/>
</dbReference>
<dbReference type="InterPro" id="IPR013083">
    <property type="entry name" value="Znf_RING/FYVE/PHD"/>
</dbReference>
<dbReference type="InterPro" id="IPR017907">
    <property type="entry name" value="Znf_RING_CS"/>
</dbReference>
<dbReference type="PANTHER" id="PTHR11224:SF10">
    <property type="entry name" value="IP09428P-RELATED"/>
    <property type="match status" value="1"/>
</dbReference>
<dbReference type="PANTHER" id="PTHR11224">
    <property type="entry name" value="MAKORIN-RELATED"/>
    <property type="match status" value="1"/>
</dbReference>
<dbReference type="Pfam" id="PF04383">
    <property type="entry name" value="KilA-N"/>
    <property type="match status" value="1"/>
</dbReference>
<dbReference type="Pfam" id="PF13639">
    <property type="entry name" value="zf-RING_2"/>
    <property type="match status" value="1"/>
</dbReference>
<dbReference type="PIRSF" id="PIRSF003775">
    <property type="entry name" value="E3_ubiquit_lig_p28"/>
    <property type="match status" value="1"/>
</dbReference>
<dbReference type="SMART" id="SM00184">
    <property type="entry name" value="RING"/>
    <property type="match status" value="1"/>
</dbReference>
<dbReference type="SUPFAM" id="SSF57850">
    <property type="entry name" value="RING/U-box"/>
    <property type="match status" value="1"/>
</dbReference>
<dbReference type="PROSITE" id="PS51301">
    <property type="entry name" value="KILA_N"/>
    <property type="match status" value="1"/>
</dbReference>
<dbReference type="PROSITE" id="PS00518">
    <property type="entry name" value="ZF_RING_1"/>
    <property type="match status" value="1"/>
</dbReference>
<dbReference type="PROSITE" id="PS50089">
    <property type="entry name" value="ZF_RING_2"/>
    <property type="match status" value="1"/>
</dbReference>
<sequence length="239" mass="28185">MEFDPAKINTSSIDHVTILQYIDEPNDIRLTVCIIRNINNITYYINITKINTHLANQFRAWKKRIAGRDYITNLSRDTGIQQSKLTETIRNCQKNRNIYGLYIHYNLVINVVIDWITDVIVQSILRGLVNWYIANNTYTPNNTTTISELDIIKILDKYEDVYRVSKEKECGICYEVVYSKRLENDRYFGLLDSCNHIFCITCINIWHKTRRETGASDNCPICRTRFRNITMSKFYKLVN</sequence>
<feature type="chain" id="PRO_0000395991" description="Host range factor p28">
    <location>
        <begin position="1"/>
        <end position="239"/>
    </location>
</feature>
<feature type="domain" description="KilA-N" evidence="3">
    <location>
        <begin position="21"/>
        <end position="131"/>
    </location>
</feature>
<feature type="zinc finger region" description="RING-type" evidence="2">
    <location>
        <begin position="170"/>
        <end position="223"/>
    </location>
</feature>
<protein>
    <recommendedName>
        <fullName>Host range factor p28</fullName>
        <ecNumber>2.3.2.-</ecNumber>
    </recommendedName>
    <alternativeName>
        <fullName>E3 ubiquitin-protein ligase p28</fullName>
    </alternativeName>
</protein>
<name>PG021_VACC0</name>